<feature type="signal peptide" evidence="2">
    <location>
        <begin position="1"/>
        <end position="18"/>
    </location>
</feature>
<feature type="peptide" id="PRO_0000034980" description="Conotoxin-like peptide 2">
    <location>
        <begin position="19"/>
        <end position="52"/>
    </location>
</feature>
<feature type="disulfide bond" evidence="1">
    <location>
        <begin position="24"/>
        <end position="38"/>
    </location>
</feature>
<feature type="disulfide bond" evidence="1">
    <location>
        <begin position="31"/>
        <end position="42"/>
    </location>
</feature>
<feature type="disulfide bond" evidence="1">
    <location>
        <begin position="37"/>
        <end position="49"/>
    </location>
</feature>
<sequence length="52" mass="5605">MKFSTILLLVCPTVALSAQYALACTETGRNCQYSYECCSGACSAAFGFCLHR</sequence>
<keyword id="KW-1015">Disulfide bond</keyword>
<keyword id="KW-0960">Knottin</keyword>
<keyword id="KW-1185">Reference proteome</keyword>
<keyword id="KW-0964">Secreted</keyword>
<keyword id="KW-0732">Signal</keyword>
<accession>O10286</accession>
<comment type="subcellular location">
    <subcellularLocation>
        <location>Secreted</location>
    </subcellularLocation>
</comment>
<comment type="domain">
    <text evidence="1">The presence of a 'disulfide through disulfide knot' structurally defines this protein as a knottin.</text>
</comment>
<organismHost>
    <name type="scientific">Orgyia pseudotsugata</name>
    <name type="common">Douglas-fir tussock moth</name>
    <dbReference type="NCBI Taxonomy" id="33414"/>
</organismHost>
<name>CXOL2_NPVOP</name>
<organism>
    <name type="scientific">Orgyia pseudotsugata multicapsid polyhedrosis virus</name>
    <name type="common">OpMNPV</name>
    <dbReference type="NCBI Taxonomy" id="262177"/>
    <lineage>
        <taxon>Viruses</taxon>
        <taxon>Viruses incertae sedis</taxon>
        <taxon>Naldaviricetes</taxon>
        <taxon>Lefavirales</taxon>
        <taxon>Baculoviridae</taxon>
        <taxon>Alphabaculovirus</taxon>
        <taxon>Alphabaculovirus orpseudotsugatae</taxon>
    </lineage>
</organism>
<dbReference type="EMBL" id="U75930">
    <property type="protein sequence ID" value="AAC59029.1"/>
    <property type="molecule type" value="Genomic_DNA"/>
</dbReference>
<dbReference type="RefSeq" id="NP_046186.1">
    <property type="nucleotide sequence ID" value="NC_001875.2"/>
</dbReference>
<dbReference type="SMR" id="O10286"/>
<dbReference type="KEGG" id="vg:912068"/>
<dbReference type="OrthoDB" id="27523at10239"/>
<dbReference type="Proteomes" id="UP000009248">
    <property type="component" value="Genome"/>
</dbReference>
<dbReference type="GO" id="GO:0005576">
    <property type="term" value="C:extracellular region"/>
    <property type="evidence" value="ECO:0007669"/>
    <property type="project" value="UniProtKB-SubCell"/>
</dbReference>
<dbReference type="InterPro" id="IPR012623">
    <property type="entry name" value="Toxin_18"/>
</dbReference>
<dbReference type="Pfam" id="PF08087">
    <property type="entry name" value="Toxin_18"/>
    <property type="match status" value="1"/>
</dbReference>
<gene>
    <name type="primary">CTL-2</name>
    <name type="ORF">ORF30</name>
</gene>
<reference key="1">
    <citation type="journal article" date="1997" name="Virology">
        <title>The sequence of the Orgyia pseudotsugata multinucleocapsid nuclear polyhedrosis virus genome.</title>
        <authorList>
            <person name="Ahrens C.H."/>
            <person name="Russell R.R."/>
            <person name="Funk C.J."/>
            <person name="Evans J."/>
            <person name="Harwood S."/>
            <person name="Rohrmann G.F."/>
        </authorList>
    </citation>
    <scope>NUCLEOTIDE SEQUENCE [LARGE SCALE GENOMIC DNA]</scope>
</reference>
<protein>
    <recommendedName>
        <fullName>Conotoxin-like peptide 2</fullName>
    </recommendedName>
</protein>
<evidence type="ECO:0000250" key="1"/>
<evidence type="ECO:0000255" key="2"/>
<proteinExistence type="inferred from homology"/>